<sequence length="57" mass="6860">MEQEQDTPWTQSTEHINTRKRENGQQIQRLEHPNSTRLMDHYLRTMSQVGTHRQIVS</sequence>
<feature type="chain" id="PRO_0000278712" description="Protein PB1-F2">
    <location>
        <begin position="1"/>
        <end position="57"/>
    </location>
</feature>
<feature type="region of interest" description="Disordered" evidence="2">
    <location>
        <begin position="1"/>
        <end position="37"/>
    </location>
</feature>
<feature type="compositionally biased region" description="Polar residues" evidence="2">
    <location>
        <begin position="1"/>
        <end position="15"/>
    </location>
</feature>
<feature type="compositionally biased region" description="Basic and acidic residues" evidence="2">
    <location>
        <begin position="16"/>
        <end position="37"/>
    </location>
</feature>
<organism>
    <name type="scientific">Influenza A virus (strain A/Gull/Minnesota/945/1980 H13N6)</name>
    <dbReference type="NCBI Taxonomy" id="385597"/>
    <lineage>
        <taxon>Viruses</taxon>
        <taxon>Riboviria</taxon>
        <taxon>Orthornavirae</taxon>
        <taxon>Negarnaviricota</taxon>
        <taxon>Polyploviricotina</taxon>
        <taxon>Insthoviricetes</taxon>
        <taxon>Articulavirales</taxon>
        <taxon>Orthomyxoviridae</taxon>
        <taxon>Alphainfluenzavirus</taxon>
        <taxon>Alphainfluenzavirus influenzae</taxon>
        <taxon>Influenza A virus</taxon>
    </lineage>
</organism>
<proteinExistence type="inferred from homology"/>
<evidence type="ECO:0000255" key="1">
    <source>
        <dbReference type="HAMAP-Rule" id="MF_04064"/>
    </source>
</evidence>
<evidence type="ECO:0000256" key="2">
    <source>
        <dbReference type="SAM" id="MobiDB-lite"/>
    </source>
</evidence>
<accession>Q20NV2</accession>
<dbReference type="EMBL" id="CY005864">
    <property type="protein sequence ID" value="ABB21770.1"/>
    <property type="molecule type" value="Genomic_RNA"/>
</dbReference>
<dbReference type="SMR" id="Q20NV2"/>
<dbReference type="Proteomes" id="UP000008581">
    <property type="component" value="Genome"/>
</dbReference>
<dbReference type="GO" id="GO:0044164">
    <property type="term" value="C:host cell cytosol"/>
    <property type="evidence" value="ECO:0007669"/>
    <property type="project" value="UniProtKB-SubCell"/>
</dbReference>
<dbReference type="GO" id="GO:0042025">
    <property type="term" value="C:host cell nucleus"/>
    <property type="evidence" value="ECO:0007669"/>
    <property type="project" value="UniProtKB-SubCell"/>
</dbReference>
<dbReference type="GO" id="GO:0016020">
    <property type="term" value="C:membrane"/>
    <property type="evidence" value="ECO:0007669"/>
    <property type="project" value="UniProtKB-UniRule"/>
</dbReference>
<dbReference type="HAMAP" id="MF_04064">
    <property type="entry name" value="INFV_PB1F2"/>
    <property type="match status" value="1"/>
</dbReference>
<dbReference type="InterPro" id="IPR021045">
    <property type="entry name" value="Flu_proapoptotic_PB1-F2"/>
</dbReference>
<dbReference type="Pfam" id="PF11986">
    <property type="entry name" value="PB1-F2"/>
    <property type="match status" value="1"/>
</dbReference>
<reference key="1">
    <citation type="journal article" date="2006" name="Science">
        <title>Large-scale sequence analysis of avian influenza isolates.</title>
        <authorList>
            <person name="Obenauer J.C."/>
            <person name="Denson J."/>
            <person name="Mehta P.K."/>
            <person name="Su X."/>
            <person name="Mukatira S."/>
            <person name="Finkelstein D.B."/>
            <person name="Xu X."/>
            <person name="Wang J."/>
            <person name="Ma J."/>
            <person name="Fan Y."/>
            <person name="Rakestraw K.M."/>
            <person name="Webster R.G."/>
            <person name="Hoffmann E."/>
            <person name="Krauss S."/>
            <person name="Zheng J."/>
            <person name="Zhang Z."/>
            <person name="Naeve C.W."/>
        </authorList>
    </citation>
    <scope>NUCLEOTIDE SEQUENCE [GENOMIC RNA]</scope>
</reference>
<organismHost>
    <name type="scientific">Aves</name>
    <dbReference type="NCBI Taxonomy" id="8782"/>
</organismHost>
<keyword id="KW-1035">Host cytoplasm</keyword>
<keyword id="KW-1048">Host nucleus</keyword>
<comment type="function">
    <text evidence="1">May play an important role in promoting lung pathology in both primary viral infection and secondary bacterial infection.</text>
</comment>
<comment type="subcellular location">
    <subcellularLocation>
        <location evidence="1">Host nucleus</location>
    </subcellularLocation>
    <subcellularLocation>
        <location evidence="1">Host cytoplasm</location>
        <location evidence="1">Host cytosol</location>
    </subcellularLocation>
</comment>
<comment type="miscellaneous">
    <text>Is not encoded in all strains, and seems to be dispensable for replication.</text>
</comment>
<comment type="similarity">
    <text evidence="1">Belongs to the influenza viruses PB1-F2 family.</text>
</comment>
<protein>
    <recommendedName>
        <fullName evidence="1">Protein PB1-F2</fullName>
    </recommendedName>
</protein>
<name>PB1F2_I80AD</name>
<gene>
    <name evidence="1" type="primary">PB1</name>
</gene>